<accession>Q8K9H4</accession>
<comment type="function">
    <text evidence="1">One of the primary rRNA binding proteins, it binds directly to 16S rRNA where it helps nucleate assembly of the platform of the 30S subunit by binding and bridging several RNA helices of the 16S rRNA.</text>
</comment>
<comment type="function">
    <text evidence="1">Forms an intersubunit bridge (bridge B4) with the 23S rRNA of the 50S subunit in the ribosome.</text>
</comment>
<comment type="subunit">
    <text evidence="1">Part of the 30S ribosomal subunit. Forms a bridge to the 50S subunit in the 70S ribosome, contacting the 23S rRNA.</text>
</comment>
<comment type="similarity">
    <text evidence="1">Belongs to the universal ribosomal protein uS15 family.</text>
</comment>
<reference key="1">
    <citation type="journal article" date="2002" name="Science">
        <title>50 million years of genomic stasis in endosymbiotic bacteria.</title>
        <authorList>
            <person name="Tamas I."/>
            <person name="Klasson L."/>
            <person name="Canbaeck B."/>
            <person name="Naeslund A.K."/>
            <person name="Eriksson A.-S."/>
            <person name="Wernegreen J.J."/>
            <person name="Sandstroem J.P."/>
            <person name="Moran N.A."/>
            <person name="Andersson S.G.E."/>
        </authorList>
    </citation>
    <scope>NUCLEOTIDE SEQUENCE [LARGE SCALE GENOMIC DNA]</scope>
    <source>
        <strain>Sg</strain>
    </source>
</reference>
<name>RS15_BUCAP</name>
<keyword id="KW-0687">Ribonucleoprotein</keyword>
<keyword id="KW-0689">Ribosomal protein</keyword>
<keyword id="KW-0694">RNA-binding</keyword>
<keyword id="KW-0699">rRNA-binding</keyword>
<dbReference type="EMBL" id="AE013218">
    <property type="protein sequence ID" value="AAM67915.1"/>
    <property type="molecule type" value="Genomic_DNA"/>
</dbReference>
<dbReference type="RefSeq" id="WP_011053882.1">
    <property type="nucleotide sequence ID" value="NC_004061.1"/>
</dbReference>
<dbReference type="SMR" id="Q8K9H4"/>
<dbReference type="STRING" id="198804.BUsg_362"/>
<dbReference type="GeneID" id="93003832"/>
<dbReference type="KEGG" id="bas:BUsg_362"/>
<dbReference type="eggNOG" id="COG0184">
    <property type="taxonomic scope" value="Bacteria"/>
</dbReference>
<dbReference type="HOGENOM" id="CLU_148518_0_0_6"/>
<dbReference type="Proteomes" id="UP000000416">
    <property type="component" value="Chromosome"/>
</dbReference>
<dbReference type="GO" id="GO:0022627">
    <property type="term" value="C:cytosolic small ribosomal subunit"/>
    <property type="evidence" value="ECO:0007669"/>
    <property type="project" value="TreeGrafter"/>
</dbReference>
<dbReference type="GO" id="GO:0019843">
    <property type="term" value="F:rRNA binding"/>
    <property type="evidence" value="ECO:0007669"/>
    <property type="project" value="UniProtKB-UniRule"/>
</dbReference>
<dbReference type="GO" id="GO:0003735">
    <property type="term" value="F:structural constituent of ribosome"/>
    <property type="evidence" value="ECO:0007669"/>
    <property type="project" value="InterPro"/>
</dbReference>
<dbReference type="GO" id="GO:0006412">
    <property type="term" value="P:translation"/>
    <property type="evidence" value="ECO:0007669"/>
    <property type="project" value="UniProtKB-UniRule"/>
</dbReference>
<dbReference type="CDD" id="cd00353">
    <property type="entry name" value="Ribosomal_S15p_S13e"/>
    <property type="match status" value="1"/>
</dbReference>
<dbReference type="Gene3D" id="6.10.250.3130">
    <property type="match status" value="1"/>
</dbReference>
<dbReference type="Gene3D" id="1.10.287.10">
    <property type="entry name" value="S15/NS1, RNA-binding"/>
    <property type="match status" value="1"/>
</dbReference>
<dbReference type="HAMAP" id="MF_01343_B">
    <property type="entry name" value="Ribosomal_uS15_B"/>
    <property type="match status" value="1"/>
</dbReference>
<dbReference type="InterPro" id="IPR000589">
    <property type="entry name" value="Ribosomal_uS15"/>
</dbReference>
<dbReference type="InterPro" id="IPR005290">
    <property type="entry name" value="Ribosomal_uS15_bac-type"/>
</dbReference>
<dbReference type="InterPro" id="IPR009068">
    <property type="entry name" value="uS15_NS1_RNA-bd_sf"/>
</dbReference>
<dbReference type="NCBIfam" id="TIGR00952">
    <property type="entry name" value="S15_bact"/>
    <property type="match status" value="1"/>
</dbReference>
<dbReference type="PANTHER" id="PTHR23321">
    <property type="entry name" value="RIBOSOMAL PROTEIN S15, BACTERIAL AND ORGANELLAR"/>
    <property type="match status" value="1"/>
</dbReference>
<dbReference type="PANTHER" id="PTHR23321:SF26">
    <property type="entry name" value="SMALL RIBOSOMAL SUBUNIT PROTEIN US15M"/>
    <property type="match status" value="1"/>
</dbReference>
<dbReference type="Pfam" id="PF00312">
    <property type="entry name" value="Ribosomal_S15"/>
    <property type="match status" value="1"/>
</dbReference>
<dbReference type="SMART" id="SM01387">
    <property type="entry name" value="Ribosomal_S15"/>
    <property type="match status" value="1"/>
</dbReference>
<dbReference type="SUPFAM" id="SSF47060">
    <property type="entry name" value="S15/NS1 RNA-binding domain"/>
    <property type="match status" value="1"/>
</dbReference>
<dbReference type="PROSITE" id="PS00362">
    <property type="entry name" value="RIBOSOMAL_S15"/>
    <property type="match status" value="1"/>
</dbReference>
<sequence length="89" mass="10466">MSLGIMTIKETILKYGKNEKNTGKTDVQIALLTNQINHLQLHFSQHKKDHCSRRGLLKMVSKRRKLLNYLKKKNISCYTKLIESLNLRR</sequence>
<evidence type="ECO:0000255" key="1">
    <source>
        <dbReference type="HAMAP-Rule" id="MF_01343"/>
    </source>
</evidence>
<evidence type="ECO:0000305" key="2"/>
<gene>
    <name evidence="1" type="primary">rpsO</name>
    <name type="ordered locus">BUsg_362</name>
</gene>
<organism>
    <name type="scientific">Buchnera aphidicola subsp. Schizaphis graminum (strain Sg)</name>
    <dbReference type="NCBI Taxonomy" id="198804"/>
    <lineage>
        <taxon>Bacteria</taxon>
        <taxon>Pseudomonadati</taxon>
        <taxon>Pseudomonadota</taxon>
        <taxon>Gammaproteobacteria</taxon>
        <taxon>Enterobacterales</taxon>
        <taxon>Erwiniaceae</taxon>
        <taxon>Buchnera</taxon>
    </lineage>
</organism>
<feature type="chain" id="PRO_0000115404" description="Small ribosomal subunit protein uS15">
    <location>
        <begin position="1"/>
        <end position="89"/>
    </location>
</feature>
<protein>
    <recommendedName>
        <fullName evidence="1">Small ribosomal subunit protein uS15</fullName>
    </recommendedName>
    <alternativeName>
        <fullName evidence="2">30S ribosomal protein S15</fullName>
    </alternativeName>
</protein>
<proteinExistence type="inferred from homology"/>